<comment type="function">
    <text evidence="1">Catalyzes the phospholipid dependent N-acylation of the N-terminal cysteine of apolipoprotein, the last step in lipoprotein maturation.</text>
</comment>
<comment type="catalytic activity">
    <reaction evidence="1">
        <text>N-terminal S-1,2-diacyl-sn-glyceryl-L-cysteinyl-[lipoprotein] + a glycerophospholipid = N-acyl-S-1,2-diacyl-sn-glyceryl-L-cysteinyl-[lipoprotein] + a 2-acyl-sn-glycero-3-phospholipid + H(+)</text>
        <dbReference type="Rhea" id="RHEA:48228"/>
        <dbReference type="Rhea" id="RHEA-COMP:14681"/>
        <dbReference type="Rhea" id="RHEA-COMP:14684"/>
        <dbReference type="ChEBI" id="CHEBI:15378"/>
        <dbReference type="ChEBI" id="CHEBI:136912"/>
        <dbReference type="ChEBI" id="CHEBI:140656"/>
        <dbReference type="ChEBI" id="CHEBI:140657"/>
        <dbReference type="ChEBI" id="CHEBI:140660"/>
        <dbReference type="EC" id="2.3.1.269"/>
    </reaction>
</comment>
<comment type="pathway">
    <text evidence="1">Protein modification; lipoprotein biosynthesis (N-acyl transfer).</text>
</comment>
<comment type="subcellular location">
    <subcellularLocation>
        <location evidence="1">Cell inner membrane</location>
        <topology evidence="1">Multi-pass membrane protein</topology>
    </subcellularLocation>
</comment>
<comment type="similarity">
    <text evidence="1">Belongs to the CN hydrolase family. Apolipoprotein N-acyltransferase subfamily.</text>
</comment>
<feature type="chain" id="PRO_0000178081" description="Apolipoprotein N-acyltransferase">
    <location>
        <begin position="1"/>
        <end position="494"/>
    </location>
</feature>
<feature type="transmembrane region" description="Helical" evidence="1">
    <location>
        <begin position="16"/>
        <end position="36"/>
    </location>
</feature>
<feature type="transmembrane region" description="Helical" evidence="1">
    <location>
        <begin position="41"/>
        <end position="61"/>
    </location>
</feature>
<feature type="transmembrane region" description="Helical" evidence="1">
    <location>
        <begin position="62"/>
        <end position="82"/>
    </location>
</feature>
<feature type="transmembrane region" description="Helical" evidence="1">
    <location>
        <begin position="133"/>
        <end position="153"/>
    </location>
</feature>
<feature type="transmembrane region" description="Helical" evidence="1">
    <location>
        <begin position="173"/>
        <end position="193"/>
    </location>
</feature>
<feature type="transmembrane region" description="Helical" evidence="1">
    <location>
        <begin position="202"/>
        <end position="222"/>
    </location>
</feature>
<feature type="transmembrane region" description="Helical" evidence="1">
    <location>
        <begin position="468"/>
        <end position="488"/>
    </location>
</feature>
<feature type="domain" description="CN hydrolase" evidence="1">
    <location>
        <begin position="235"/>
        <end position="461"/>
    </location>
</feature>
<feature type="active site" description="Proton acceptor" evidence="1">
    <location>
        <position position="276"/>
    </location>
</feature>
<feature type="active site" evidence="1">
    <location>
        <position position="325"/>
    </location>
</feature>
<feature type="active site" description="Nucleophile" evidence="1">
    <location>
        <position position="373"/>
    </location>
</feature>
<evidence type="ECO:0000255" key="1">
    <source>
        <dbReference type="HAMAP-Rule" id="MF_01148"/>
    </source>
</evidence>
<proteinExistence type="inferred from homology"/>
<organism>
    <name type="scientific">Prochlorococcus marinus (strain SARG / CCMP1375 / SS120)</name>
    <dbReference type="NCBI Taxonomy" id="167539"/>
    <lineage>
        <taxon>Bacteria</taxon>
        <taxon>Bacillati</taxon>
        <taxon>Cyanobacteriota</taxon>
        <taxon>Cyanophyceae</taxon>
        <taxon>Synechococcales</taxon>
        <taxon>Prochlorococcaceae</taxon>
        <taxon>Prochlorococcus</taxon>
    </lineage>
</organism>
<accession>Q7VAT8</accession>
<dbReference type="EC" id="2.3.1.269" evidence="1"/>
<dbReference type="EMBL" id="AE017126">
    <property type="protein sequence ID" value="AAQ00410.1"/>
    <property type="molecule type" value="Genomic_DNA"/>
</dbReference>
<dbReference type="RefSeq" id="NP_875757.1">
    <property type="nucleotide sequence ID" value="NC_005042.1"/>
</dbReference>
<dbReference type="RefSeq" id="WP_011125517.1">
    <property type="nucleotide sequence ID" value="NC_005042.1"/>
</dbReference>
<dbReference type="SMR" id="Q7VAT8"/>
<dbReference type="STRING" id="167539.Pro_1366"/>
<dbReference type="EnsemblBacteria" id="AAQ00410">
    <property type="protein sequence ID" value="AAQ00410"/>
    <property type="gene ID" value="Pro_1366"/>
</dbReference>
<dbReference type="KEGG" id="pma:Pro_1366"/>
<dbReference type="PATRIC" id="fig|167539.5.peg.1432"/>
<dbReference type="eggNOG" id="COG0815">
    <property type="taxonomic scope" value="Bacteria"/>
</dbReference>
<dbReference type="HOGENOM" id="CLU_019563_1_0_3"/>
<dbReference type="OrthoDB" id="9804277at2"/>
<dbReference type="UniPathway" id="UPA00666"/>
<dbReference type="Proteomes" id="UP000001420">
    <property type="component" value="Chromosome"/>
</dbReference>
<dbReference type="GO" id="GO:0005886">
    <property type="term" value="C:plasma membrane"/>
    <property type="evidence" value="ECO:0007669"/>
    <property type="project" value="UniProtKB-SubCell"/>
</dbReference>
<dbReference type="GO" id="GO:0016410">
    <property type="term" value="F:N-acyltransferase activity"/>
    <property type="evidence" value="ECO:0007669"/>
    <property type="project" value="UniProtKB-UniRule"/>
</dbReference>
<dbReference type="GO" id="GO:0042158">
    <property type="term" value="P:lipoprotein biosynthetic process"/>
    <property type="evidence" value="ECO:0007669"/>
    <property type="project" value="UniProtKB-UniRule"/>
</dbReference>
<dbReference type="CDD" id="cd07571">
    <property type="entry name" value="ALP_N-acyl_transferase"/>
    <property type="match status" value="1"/>
</dbReference>
<dbReference type="Gene3D" id="3.60.110.10">
    <property type="entry name" value="Carbon-nitrogen hydrolase"/>
    <property type="match status" value="1"/>
</dbReference>
<dbReference type="HAMAP" id="MF_01148">
    <property type="entry name" value="Lnt"/>
    <property type="match status" value="1"/>
</dbReference>
<dbReference type="InterPro" id="IPR004563">
    <property type="entry name" value="Apolipo_AcylTrfase"/>
</dbReference>
<dbReference type="InterPro" id="IPR003010">
    <property type="entry name" value="C-N_Hydrolase"/>
</dbReference>
<dbReference type="InterPro" id="IPR036526">
    <property type="entry name" value="C-N_Hydrolase_sf"/>
</dbReference>
<dbReference type="PANTHER" id="PTHR38686">
    <property type="entry name" value="APOLIPOPROTEIN N-ACYLTRANSFERASE"/>
    <property type="match status" value="1"/>
</dbReference>
<dbReference type="PANTHER" id="PTHR38686:SF1">
    <property type="entry name" value="APOLIPOPROTEIN N-ACYLTRANSFERASE"/>
    <property type="match status" value="1"/>
</dbReference>
<dbReference type="SUPFAM" id="SSF56317">
    <property type="entry name" value="Carbon-nitrogen hydrolase"/>
    <property type="match status" value="1"/>
</dbReference>
<dbReference type="PROSITE" id="PS50263">
    <property type="entry name" value="CN_HYDROLASE"/>
    <property type="match status" value="1"/>
</dbReference>
<name>LNT_PROMA</name>
<gene>
    <name evidence="1" type="primary">lnt</name>
    <name type="ordered locus">Pro_1366</name>
</gene>
<protein>
    <recommendedName>
        <fullName evidence="1">Apolipoprotein N-acyltransferase</fullName>
        <shortName evidence="1">ALP N-acyltransferase</shortName>
        <ecNumber evidence="1">2.3.1.269</ecNumber>
    </recommendedName>
</protein>
<sequence>MLALSRSKYFAFLTGTVGGLLAGVGLSQGGVVFIWISTACLWASMAFPSAVFLWGLFAILLSYRWLLYLHPLTWIGVPIAFSLPIAILIWFSCGLLGGLLVALWSLIGQIPFFQRRLNSSTKDQLLYVIALSLIWGLVEVGLAKSPFFWFGLGDSLLPYDRWLAGLARWFGSGGLAALQLILGWWVWKIIFAFKKGSPWLGLFALGVCSLLLAHCIGWILLADNEFTSSKRIALWQTNIPTRQKFTLRELKRLPISLQDALEEADNLGADWMVAPEGTLSAGQNLLAPSPLPLLSGGFRRVKNKQMSSLLVFNEGSTSYSSAIDKHRLVPLGEWLPSLPGVNWNGLSFVGGVDPGDASRFFDWDGGPLAVAICYELSDGNNLAKAIFDGAEWILAIANLDPYPISLQRQFLALAQLRSIESARNLISVANTGPTSMILSSGKIKSIIEPFNEGVGVIDINVSQKISGYVRWGEIPLISSLLIVLCFIARLKGKA</sequence>
<reference key="1">
    <citation type="journal article" date="2003" name="Proc. Natl. Acad. Sci. U.S.A.">
        <title>Genome sequence of the cyanobacterium Prochlorococcus marinus SS120, a nearly minimal oxyphototrophic genome.</title>
        <authorList>
            <person name="Dufresne A."/>
            <person name="Salanoubat M."/>
            <person name="Partensky F."/>
            <person name="Artiguenave F."/>
            <person name="Axmann I.M."/>
            <person name="Barbe V."/>
            <person name="Duprat S."/>
            <person name="Galperin M.Y."/>
            <person name="Koonin E.V."/>
            <person name="Le Gall F."/>
            <person name="Makarova K.S."/>
            <person name="Ostrowski M."/>
            <person name="Oztas S."/>
            <person name="Robert C."/>
            <person name="Rogozin I.B."/>
            <person name="Scanlan D.J."/>
            <person name="Tandeau de Marsac N."/>
            <person name="Weissenbach J."/>
            <person name="Wincker P."/>
            <person name="Wolf Y.I."/>
            <person name="Hess W.R."/>
        </authorList>
    </citation>
    <scope>NUCLEOTIDE SEQUENCE [LARGE SCALE GENOMIC DNA]</scope>
    <source>
        <strain>SARG / CCMP1375 / SS120</strain>
    </source>
</reference>
<keyword id="KW-0012">Acyltransferase</keyword>
<keyword id="KW-0997">Cell inner membrane</keyword>
<keyword id="KW-1003">Cell membrane</keyword>
<keyword id="KW-0472">Membrane</keyword>
<keyword id="KW-1185">Reference proteome</keyword>
<keyword id="KW-0808">Transferase</keyword>
<keyword id="KW-0812">Transmembrane</keyword>
<keyword id="KW-1133">Transmembrane helix</keyword>